<feature type="transit peptide" description="Chloroplast" evidence="2">
    <location>
        <begin position="1"/>
        <end position="45"/>
    </location>
</feature>
<feature type="chain" id="PRO_0000422877" description="2-methyl-6-phytyl-1,4-hydroquinone methyltransferase 1, chloroplastic">
    <location>
        <begin position="46"/>
        <end position="330"/>
    </location>
</feature>
<feature type="topological domain" description="Chloroplast intermembrane" evidence="2">
    <location>
        <begin position="46"/>
        <end position="295"/>
    </location>
</feature>
<feature type="transmembrane region" description="Helical" evidence="2">
    <location>
        <begin position="296"/>
        <end position="316"/>
    </location>
</feature>
<feature type="topological domain" description="Stromal" evidence="2">
    <location>
        <begin position="317"/>
        <end position="330"/>
    </location>
</feature>
<feature type="region of interest" description="SAM motif I" evidence="3">
    <location>
        <begin position="107"/>
        <end position="116"/>
    </location>
</feature>
<feature type="region of interest" description="SAM motif II" evidence="3">
    <location>
        <begin position="152"/>
        <end position="165"/>
    </location>
</feature>
<feature type="region of interest" description="SAM motif III" evidence="3">
    <location>
        <begin position="193"/>
        <end position="206"/>
    </location>
</feature>
<evidence type="ECO:0000250" key="1"/>
<evidence type="ECO:0000255" key="2"/>
<evidence type="ECO:0000255" key="3">
    <source>
        <dbReference type="PROSITE-ProRule" id="PRU01069"/>
    </source>
</evidence>
<dbReference type="EC" id="2.1.1.295"/>
<dbReference type="EMBL" id="DQ514526">
    <property type="protein sequence ID" value="ABF60542.1"/>
    <property type="molecule type" value="mRNA"/>
</dbReference>
<dbReference type="EMBL" id="AP003800">
    <property type="protein sequence ID" value="BAC83032.1"/>
    <property type="molecule type" value="Genomic_DNA"/>
</dbReference>
<dbReference type="EMBL" id="AP003826">
    <property type="protein sequence ID" value="BAD30335.1"/>
    <property type="molecule type" value="Genomic_DNA"/>
</dbReference>
<dbReference type="EMBL" id="AP014963">
    <property type="protein sequence ID" value="BAT00307.1"/>
    <property type="molecule type" value="Genomic_DNA"/>
</dbReference>
<dbReference type="RefSeq" id="XP_015647024.1">
    <property type="nucleotide sequence ID" value="XM_015791538.1"/>
</dbReference>
<dbReference type="SMR" id="Q6ZLD3"/>
<dbReference type="FunCoup" id="Q6ZLD3">
    <property type="interactions" value="1129"/>
</dbReference>
<dbReference type="STRING" id="39947.Q6ZLD3"/>
<dbReference type="PaxDb" id="39947-Q6ZLD3"/>
<dbReference type="EnsemblPlants" id="Os07t0179300-00">
    <property type="protein sequence ID" value="Os07t0179300-00"/>
    <property type="gene ID" value="Os07g0179300"/>
</dbReference>
<dbReference type="Gramene" id="Os07t0179300-00">
    <property type="protein sequence ID" value="Os07t0179300-00"/>
    <property type="gene ID" value="Os07g0179300"/>
</dbReference>
<dbReference type="eggNOG" id="KOG1540">
    <property type="taxonomic scope" value="Eukaryota"/>
</dbReference>
<dbReference type="HOGENOM" id="CLU_051421_0_0_1"/>
<dbReference type="InParanoid" id="Q6ZLD3"/>
<dbReference type="OMA" id="HARSIPR"/>
<dbReference type="OrthoDB" id="10017101at2759"/>
<dbReference type="PlantReactome" id="R-OSA-1119287">
    <property type="pathway name" value="Vitamin E biosynthesis"/>
</dbReference>
<dbReference type="UniPathway" id="UPA00160"/>
<dbReference type="Proteomes" id="UP000000763">
    <property type="component" value="Chromosome 7"/>
</dbReference>
<dbReference type="Proteomes" id="UP000059680">
    <property type="component" value="Chromosome 7"/>
</dbReference>
<dbReference type="GO" id="GO:0009706">
    <property type="term" value="C:chloroplast inner membrane"/>
    <property type="evidence" value="ECO:0007669"/>
    <property type="project" value="UniProtKB-SubCell"/>
</dbReference>
<dbReference type="GO" id="GO:0102550">
    <property type="term" value="F:2-methyl-6-geranylgeranyl-1,4-benzoquinol methyltransferase activity"/>
    <property type="evidence" value="ECO:0007669"/>
    <property type="project" value="UniProtKB-EC"/>
</dbReference>
<dbReference type="GO" id="GO:0051741">
    <property type="term" value="F:2-methyl-6-phytyl-1,4-benzoquinone methyltransferase activity"/>
    <property type="evidence" value="ECO:0007669"/>
    <property type="project" value="InterPro"/>
</dbReference>
<dbReference type="GO" id="GO:0051742">
    <property type="term" value="F:2-methyl-6-solanyl-1,4-benzoquinone methyltransferase activity"/>
    <property type="evidence" value="ECO:0007669"/>
    <property type="project" value="RHEA"/>
</dbReference>
<dbReference type="GO" id="GO:0032259">
    <property type="term" value="P:methylation"/>
    <property type="evidence" value="ECO:0007669"/>
    <property type="project" value="UniProtKB-KW"/>
</dbReference>
<dbReference type="GO" id="GO:0010189">
    <property type="term" value="P:vitamin E biosynthetic process"/>
    <property type="evidence" value="ECO:0007669"/>
    <property type="project" value="UniProtKB-UniPathway"/>
</dbReference>
<dbReference type="CDD" id="cd02440">
    <property type="entry name" value="AdoMet_MTases"/>
    <property type="match status" value="1"/>
</dbReference>
<dbReference type="Gene3D" id="3.40.50.150">
    <property type="entry name" value="Vaccinia Virus protein VP39"/>
    <property type="match status" value="1"/>
</dbReference>
<dbReference type="InterPro" id="IPR013216">
    <property type="entry name" value="Methyltransf_11"/>
</dbReference>
<dbReference type="InterPro" id="IPR044649">
    <property type="entry name" value="MPBQ/MSBQ_MT"/>
</dbReference>
<dbReference type="InterPro" id="IPR029063">
    <property type="entry name" value="SAM-dependent_MTases_sf"/>
</dbReference>
<dbReference type="InterPro" id="IPR031164">
    <property type="entry name" value="SAM_MPBQ_MSBQ_MT"/>
</dbReference>
<dbReference type="PANTHER" id="PTHR44516:SF8">
    <property type="entry name" value="2-METHYL-6-PHYTYL-1,4-HYDROQUINONE METHYLTRANSFERASE 1, CHLOROPLASTIC"/>
    <property type="match status" value="1"/>
</dbReference>
<dbReference type="PANTHER" id="PTHR44516">
    <property type="entry name" value="2-METHYL-6-PHYTYL-1,4-HYDROQUINONE METHYLTRANSFERASE, CHLOROPLASTIC"/>
    <property type="match status" value="1"/>
</dbReference>
<dbReference type="Pfam" id="PF08241">
    <property type="entry name" value="Methyltransf_11"/>
    <property type="match status" value="1"/>
</dbReference>
<dbReference type="SUPFAM" id="SSF53335">
    <property type="entry name" value="S-adenosyl-L-methionine-dependent methyltransferases"/>
    <property type="match status" value="1"/>
</dbReference>
<dbReference type="PROSITE" id="PS51734">
    <property type="entry name" value="SAM_MPBQ_MSBQ_MT"/>
    <property type="match status" value="1"/>
</dbReference>
<keyword id="KW-0150">Chloroplast</keyword>
<keyword id="KW-0472">Membrane</keyword>
<keyword id="KW-0489">Methyltransferase</keyword>
<keyword id="KW-0934">Plastid</keyword>
<keyword id="KW-1001">Plastid inner membrane</keyword>
<keyword id="KW-1185">Reference proteome</keyword>
<keyword id="KW-0949">S-adenosyl-L-methionine</keyword>
<keyword id="KW-0808">Transferase</keyword>
<keyword id="KW-0809">Transit peptide</keyword>
<keyword id="KW-0812">Transmembrane</keyword>
<keyword id="KW-1133">Transmembrane helix</keyword>
<gene>
    <name type="primary">ARSM2</name>
    <name type="ordered locus">Os07g0179300</name>
    <name type="ordered locus">LOC_Os07g08200</name>
    <name type="ORF">OJ1014_E09.7</name>
    <name type="ORF">OJ1361_E02.125</name>
</gene>
<sequence>MKEMVSSSTFRAPGGLGFLGPSKIGLIPLRNRSGVRSRVKYIAPKCAVSSARPASQPRFIQHKKEAFWFYRFLSIVYDHVINPGHWTEDMRDDALEPAELYHHGLKVVDVGGGTGFTTLGIVKHVDNENVTLLDQSPHQLEKARQKVALNGVNIIEGDAEDLPYPTDTFDRYVSAGSIEYWPDPQRGIREAYRVLKLGGVACLIGPVHPTFWLSRFFADMWMLFPKEEEYIEWFQKAGFQDVKIKRIGPKWYRGVRRHGLIMGCSVTGVKRSSGDSPLQLGPKAEDVEKPVNPFTFIFRFVMGTICASYYVLVPIYMWMKDQIVPKDQPI</sequence>
<name>BQMT1_ORYSJ</name>
<proteinExistence type="evidence at transcript level"/>
<protein>
    <recommendedName>
        <fullName>2-methyl-6-phytyl-1,4-hydroquinone methyltransferase 1, chloroplastic</fullName>
        <ecNumber>2.1.1.295</ecNumber>
    </recommendedName>
    <alternativeName>
        <fullName>37 kDa inner envelope membrane protein</fullName>
        <shortName>E37</shortName>
    </alternativeName>
    <alternativeName>
        <fullName>Arsenite methyltransferase 2</fullName>
        <shortName>OsArsM2</shortName>
    </alternativeName>
    <alternativeName>
        <fullName>MPBQ/MSBQ methyltransferase</fullName>
    </alternativeName>
    <alternativeName>
        <fullName>Protein VTE3 homolog</fullName>
    </alternativeName>
</protein>
<organism>
    <name type="scientific">Oryza sativa subsp. japonica</name>
    <name type="common">Rice</name>
    <dbReference type="NCBI Taxonomy" id="39947"/>
    <lineage>
        <taxon>Eukaryota</taxon>
        <taxon>Viridiplantae</taxon>
        <taxon>Streptophyta</taxon>
        <taxon>Embryophyta</taxon>
        <taxon>Tracheophyta</taxon>
        <taxon>Spermatophyta</taxon>
        <taxon>Magnoliopsida</taxon>
        <taxon>Liliopsida</taxon>
        <taxon>Poales</taxon>
        <taxon>Poaceae</taxon>
        <taxon>BOP clade</taxon>
        <taxon>Oryzoideae</taxon>
        <taxon>Oryzeae</taxon>
        <taxon>Oryzinae</taxon>
        <taxon>Oryza</taxon>
        <taxon>Oryza sativa</taxon>
    </lineage>
</organism>
<accession>Q6ZLD3</accession>
<accession>A0A0P0X3P8</accession>
<reference key="1">
    <citation type="submission" date="2006-04" db="EMBL/GenBank/DDBJ databases">
        <title>Arsenite methylation in rice.</title>
        <authorList>
            <person name="Duan G."/>
            <person name="Rosen B.P."/>
            <person name="Zhu Y."/>
        </authorList>
    </citation>
    <scope>NUCLEOTIDE SEQUENCE [MRNA]</scope>
    <source>
        <tissue>Root</tissue>
    </source>
</reference>
<reference key="2">
    <citation type="journal article" date="2005" name="Nature">
        <title>The map-based sequence of the rice genome.</title>
        <authorList>
            <consortium name="International rice genome sequencing project (IRGSP)"/>
        </authorList>
    </citation>
    <scope>NUCLEOTIDE SEQUENCE [LARGE SCALE GENOMIC DNA]</scope>
    <source>
        <strain>cv. Nipponbare</strain>
    </source>
</reference>
<reference key="3">
    <citation type="journal article" date="2013" name="Rice">
        <title>Improvement of the Oryza sativa Nipponbare reference genome using next generation sequence and optical map data.</title>
        <authorList>
            <person name="Kawahara Y."/>
            <person name="de la Bastide M."/>
            <person name="Hamilton J.P."/>
            <person name="Kanamori H."/>
            <person name="McCombie W.R."/>
            <person name="Ouyang S."/>
            <person name="Schwartz D.C."/>
            <person name="Tanaka T."/>
            <person name="Wu J."/>
            <person name="Zhou S."/>
            <person name="Childs K.L."/>
            <person name="Davidson R.M."/>
            <person name="Lin H."/>
            <person name="Quesada-Ocampo L."/>
            <person name="Vaillancourt B."/>
            <person name="Sakai H."/>
            <person name="Lee S.S."/>
            <person name="Kim J."/>
            <person name="Numa H."/>
            <person name="Itoh T."/>
            <person name="Buell C.R."/>
            <person name="Matsumoto T."/>
        </authorList>
    </citation>
    <scope>GENOME REANNOTATION</scope>
    <source>
        <strain>cv. Nipponbare</strain>
    </source>
</reference>
<comment type="function">
    <text evidence="1">Involved in a key methylation step in both tocopherols (vitamin E) and plastoquinone synthesis. Catalyzes the conversion of 2-methyl-6-phytyl-1,4-hydroquinone (MPBQ) to 2,3-dimethyl-6-phytyl-1,4-hydroquinone (DMPQ, a substrate for tocopherol cyclase), and 2-methyl-6-solanyl-1,4-benzoquinone (MSBQ) to plastoquinone (By similarity).</text>
</comment>
<comment type="catalytic activity">
    <reaction>
        <text>2-methyl-6-phytyl-1,4-benzene-1,4-diol + S-adenosyl-L-methionine = 2,3-dimethyl-6-phytylbenzene-1,4-diol + S-adenosyl-L-homocysteine + H(+)</text>
        <dbReference type="Rhea" id="RHEA:37979"/>
        <dbReference type="ChEBI" id="CHEBI:15378"/>
        <dbReference type="ChEBI" id="CHEBI:57856"/>
        <dbReference type="ChEBI" id="CHEBI:59789"/>
        <dbReference type="ChEBI" id="CHEBI:75920"/>
        <dbReference type="ChEBI" id="CHEBI:75921"/>
        <dbReference type="EC" id="2.1.1.295"/>
    </reaction>
</comment>
<comment type="catalytic activity">
    <reaction>
        <text>2-methyl-6-(all-trans-nonaprenyl)benzene-1,4-diol + S-adenosyl-L-methionine = plastoquinol-9 + S-adenosyl-L-homocysteine + H(+)</text>
        <dbReference type="Rhea" id="RHEA:37999"/>
        <dbReference type="ChEBI" id="CHEBI:15378"/>
        <dbReference type="ChEBI" id="CHEBI:28026"/>
        <dbReference type="ChEBI" id="CHEBI:57856"/>
        <dbReference type="ChEBI" id="CHEBI:59789"/>
        <dbReference type="ChEBI" id="CHEBI:75402"/>
        <dbReference type="EC" id="2.1.1.295"/>
    </reaction>
</comment>
<comment type="catalytic activity">
    <reaction>
        <text>6-geranylgeranyl-2-methylbenzene-1,4-diol + S-adenosyl-L-methionine = 6-geranylgeranyl-2,3-dimethylbenzene-1,4-diol + S-adenosyl-L-homocysteine + H(+)</text>
        <dbReference type="Rhea" id="RHEA:38007"/>
        <dbReference type="ChEBI" id="CHEBI:15378"/>
        <dbReference type="ChEBI" id="CHEBI:57856"/>
        <dbReference type="ChEBI" id="CHEBI:59789"/>
        <dbReference type="ChEBI" id="CHEBI:75411"/>
        <dbReference type="ChEBI" id="CHEBI:75412"/>
        <dbReference type="EC" id="2.1.1.295"/>
    </reaction>
</comment>
<comment type="pathway">
    <text>Cofactor biosynthesis; tocopherol biosynthesis.</text>
</comment>
<comment type="subcellular location">
    <subcellularLocation>
        <location evidence="1">Plastid</location>
        <location evidence="1">Chloroplast inner membrane</location>
        <topology evidence="1">Single-pass membrane protein</topology>
    </subcellularLocation>
</comment>
<comment type="similarity">
    <text evidence="3">Belongs to the class I-like SAM-binding methyltransferase superfamily. MPBQ/MBSQ MT family.</text>
</comment>